<dbReference type="EMBL" id="CP001154">
    <property type="protein sequence ID" value="ACO75013.1"/>
    <property type="molecule type" value="Genomic_DNA"/>
</dbReference>
<dbReference type="RefSeq" id="WP_012697499.1">
    <property type="nucleotide sequence ID" value="NC_012559.1"/>
</dbReference>
<dbReference type="SMR" id="C1D973"/>
<dbReference type="STRING" id="557598.LHK_02029"/>
<dbReference type="KEGG" id="lhk:LHK_02029"/>
<dbReference type="eggNOG" id="COG1660">
    <property type="taxonomic scope" value="Bacteria"/>
</dbReference>
<dbReference type="HOGENOM" id="CLU_059558_1_1_4"/>
<dbReference type="Proteomes" id="UP000002010">
    <property type="component" value="Chromosome"/>
</dbReference>
<dbReference type="GO" id="GO:0005524">
    <property type="term" value="F:ATP binding"/>
    <property type="evidence" value="ECO:0007669"/>
    <property type="project" value="UniProtKB-UniRule"/>
</dbReference>
<dbReference type="GO" id="GO:0005525">
    <property type="term" value="F:GTP binding"/>
    <property type="evidence" value="ECO:0007669"/>
    <property type="project" value="UniProtKB-UniRule"/>
</dbReference>
<dbReference type="Gene3D" id="3.40.50.300">
    <property type="entry name" value="P-loop containing nucleotide triphosphate hydrolases"/>
    <property type="match status" value="1"/>
</dbReference>
<dbReference type="HAMAP" id="MF_00636">
    <property type="entry name" value="RapZ_like"/>
    <property type="match status" value="1"/>
</dbReference>
<dbReference type="InterPro" id="IPR027417">
    <property type="entry name" value="P-loop_NTPase"/>
</dbReference>
<dbReference type="InterPro" id="IPR005337">
    <property type="entry name" value="RapZ-like"/>
</dbReference>
<dbReference type="InterPro" id="IPR053930">
    <property type="entry name" value="RapZ-like_N"/>
</dbReference>
<dbReference type="InterPro" id="IPR053931">
    <property type="entry name" value="RapZ_C"/>
</dbReference>
<dbReference type="NCBIfam" id="NF003828">
    <property type="entry name" value="PRK05416.1"/>
    <property type="match status" value="1"/>
</dbReference>
<dbReference type="PANTHER" id="PTHR30448">
    <property type="entry name" value="RNASE ADAPTER PROTEIN RAPZ"/>
    <property type="match status" value="1"/>
</dbReference>
<dbReference type="PANTHER" id="PTHR30448:SF0">
    <property type="entry name" value="RNASE ADAPTER PROTEIN RAPZ"/>
    <property type="match status" value="1"/>
</dbReference>
<dbReference type="Pfam" id="PF22740">
    <property type="entry name" value="PapZ_C"/>
    <property type="match status" value="1"/>
</dbReference>
<dbReference type="Pfam" id="PF03668">
    <property type="entry name" value="RapZ-like_N"/>
    <property type="match status" value="1"/>
</dbReference>
<dbReference type="PIRSF" id="PIRSF005052">
    <property type="entry name" value="P-loopkin"/>
    <property type="match status" value="1"/>
</dbReference>
<dbReference type="SUPFAM" id="SSF52540">
    <property type="entry name" value="P-loop containing nucleoside triphosphate hydrolases"/>
    <property type="match status" value="1"/>
</dbReference>
<name>Y2029_LARHH</name>
<accession>C1D973</accession>
<proteinExistence type="inferred from homology"/>
<gene>
    <name type="ordered locus">LHK_02029</name>
</gene>
<evidence type="ECO:0000255" key="1">
    <source>
        <dbReference type="HAMAP-Rule" id="MF_00636"/>
    </source>
</evidence>
<keyword id="KW-0067">ATP-binding</keyword>
<keyword id="KW-0342">GTP-binding</keyword>
<keyword id="KW-0547">Nucleotide-binding</keyword>
<keyword id="KW-1185">Reference proteome</keyword>
<reference key="1">
    <citation type="journal article" date="2009" name="PLoS Genet.">
        <title>The complete genome and proteome of Laribacter hongkongensis reveal potential mechanisms for adaptations to different temperatures and habitats.</title>
        <authorList>
            <person name="Woo P.C.Y."/>
            <person name="Lau S.K.P."/>
            <person name="Tse H."/>
            <person name="Teng J.L.L."/>
            <person name="Curreem S.O."/>
            <person name="Tsang A.K.L."/>
            <person name="Fan R.Y.Y."/>
            <person name="Wong G.K.M."/>
            <person name="Huang Y."/>
            <person name="Loman N.J."/>
            <person name="Snyder L.A.S."/>
            <person name="Cai J.J."/>
            <person name="Huang J.-D."/>
            <person name="Mak W."/>
            <person name="Pallen M.J."/>
            <person name="Lok S."/>
            <person name="Yuen K.-Y."/>
        </authorList>
    </citation>
    <scope>NUCLEOTIDE SEQUENCE [LARGE SCALE GENOMIC DNA]</scope>
    <source>
        <strain>HLHK9</strain>
    </source>
</reference>
<organism>
    <name type="scientific">Laribacter hongkongensis (strain HLHK9)</name>
    <dbReference type="NCBI Taxonomy" id="557598"/>
    <lineage>
        <taxon>Bacteria</taxon>
        <taxon>Pseudomonadati</taxon>
        <taxon>Pseudomonadota</taxon>
        <taxon>Betaproteobacteria</taxon>
        <taxon>Neisseriales</taxon>
        <taxon>Aquaspirillaceae</taxon>
        <taxon>Laribacter</taxon>
    </lineage>
</organism>
<sequence length="278" mass="31100">MQLILISGLAGSGKSIALNVLEDSGYSCIDNLPLTLVPDTVERLAPLGYEQLAISIDTRDGASRLLEVIHALETAGHNVRFLFLEARTDTLIRRFSETRRRHPLSRTALTIPEAIARERQLLQAIAGLGHRIDTSDLSPNQLRRYLRDVIAQAPGRMLVVIQSFGFKHGVPLDADFVFDVRCLPNPYYDPALRPFTGRDAPIINFLTAEPLVQAMADELSGLALRWIPVFRHDNRNYLTFAIGCTGGQHRSVYLAETLAARLRETGETVLLRHRELDR</sequence>
<protein>
    <recommendedName>
        <fullName evidence="1">Nucleotide-binding protein LHK_02029</fullName>
    </recommendedName>
</protein>
<comment type="function">
    <text evidence="1">Displays ATPase and GTPase activities.</text>
</comment>
<comment type="similarity">
    <text evidence="1">Belongs to the RapZ-like family.</text>
</comment>
<feature type="chain" id="PRO_0000383257" description="Nucleotide-binding protein LHK_02029">
    <location>
        <begin position="1"/>
        <end position="278"/>
    </location>
</feature>
<feature type="binding site" evidence="1">
    <location>
        <begin position="8"/>
        <end position="15"/>
    </location>
    <ligand>
        <name>ATP</name>
        <dbReference type="ChEBI" id="CHEBI:30616"/>
    </ligand>
</feature>
<feature type="binding site" evidence="1">
    <location>
        <begin position="57"/>
        <end position="60"/>
    </location>
    <ligand>
        <name>GTP</name>
        <dbReference type="ChEBI" id="CHEBI:37565"/>
    </ligand>
</feature>